<reference evidence="10" key="1">
    <citation type="journal article" date="2001" name="J. Bacteriol.">
        <title>Genome of the bacterium Streptococcus pneumoniae strain R6.</title>
        <authorList>
            <person name="Hoskins J."/>
            <person name="Alborn W.E. Jr."/>
            <person name="Arnold J."/>
            <person name="Blaszczak L.C."/>
            <person name="Burgett S."/>
            <person name="DeHoff B.S."/>
            <person name="Estrem S.T."/>
            <person name="Fritz L."/>
            <person name="Fu D.-J."/>
            <person name="Fuller W."/>
            <person name="Geringer C."/>
            <person name="Gilmour R."/>
            <person name="Glass J.S."/>
            <person name="Khoja H."/>
            <person name="Kraft A.R."/>
            <person name="Lagace R.E."/>
            <person name="LeBlanc D.J."/>
            <person name="Lee L.N."/>
            <person name="Lefkowitz E.J."/>
            <person name="Lu J."/>
            <person name="Matsushima P."/>
            <person name="McAhren S.M."/>
            <person name="McHenney M."/>
            <person name="McLeaster K."/>
            <person name="Mundy C.W."/>
            <person name="Nicas T.I."/>
            <person name="Norris F.H."/>
            <person name="O'Gara M."/>
            <person name="Peery R.B."/>
            <person name="Robertson G.T."/>
            <person name="Rockey P."/>
            <person name="Sun P.-M."/>
            <person name="Winkler M.E."/>
            <person name="Yang Y."/>
            <person name="Young-Bellido M."/>
            <person name="Zhao G."/>
            <person name="Zook C.A."/>
            <person name="Baltz R.H."/>
            <person name="Jaskunas S.R."/>
            <person name="Rosteck P.R. Jr."/>
            <person name="Skatrud P.L."/>
            <person name="Glass J.I."/>
        </authorList>
    </citation>
    <scope>NUCLEOTIDE SEQUENCE [LARGE SCALE GENOMIC DNA]</scope>
    <source>
        <strain evidence="10">ATCC BAA-255 / R6</strain>
    </source>
</reference>
<reference evidence="8" key="2">
    <citation type="journal article" date="2002" name="Infect. Immun.">
        <title>Genetic analysis and functional characterization of the Streptococcus pneumoniae vic operon.</title>
        <authorList>
            <person name="Wagner C."/>
            <person name="de Saizieu A."/>
            <person name="Schoenfeld H.-J."/>
            <person name="Kamber M."/>
            <person name="Lange R."/>
            <person name="Thompson C.J."/>
            <person name="Page M.G."/>
        </authorList>
    </citation>
    <scope>DISRUPTION PHENOTYPE</scope>
</reference>
<reference evidence="8" key="3">
    <citation type="journal article" date="2003" name="Mol. Microbiol.">
        <title>Constitutive expression of PcsB suppresses the requirement for the essential VicR (YycF) response regulator in Streptococcus pneumoniae R6.</title>
        <authorList>
            <person name="Ng W.L."/>
            <person name="Robertson G.T."/>
            <person name="Kazmierczak K.M."/>
            <person name="Zhao J."/>
            <person name="Gilmour R."/>
            <person name="Winkler M.E."/>
        </authorList>
    </citation>
    <scope>FUNCTION</scope>
    <scope>DISRUPTION PHENOTYPE</scope>
</reference>
<evidence type="ECO:0000250" key="1">
    <source>
        <dbReference type="UniProtKB" id="A0A0H2ZQT7"/>
    </source>
</evidence>
<evidence type="ECO:0000250" key="2">
    <source>
        <dbReference type="UniProtKB" id="A0A4Y1WBN6"/>
    </source>
</evidence>
<evidence type="ECO:0000250" key="3">
    <source>
        <dbReference type="UniProtKB" id="C0SP91"/>
    </source>
</evidence>
<evidence type="ECO:0000250" key="4">
    <source>
        <dbReference type="UniProtKB" id="Q8ZRM2"/>
    </source>
</evidence>
<evidence type="ECO:0000269" key="5">
    <source>
    </source>
</evidence>
<evidence type="ECO:0000269" key="6">
    <source>
    </source>
</evidence>
<evidence type="ECO:0000303" key="7">
    <source>
    </source>
</evidence>
<evidence type="ECO:0000305" key="8"/>
<evidence type="ECO:0000312" key="9">
    <source>
        <dbReference type="EMBL" id="AAK99908.1"/>
    </source>
</evidence>
<evidence type="ECO:0000312" key="10">
    <source>
        <dbReference type="Proteomes" id="UP000000586"/>
    </source>
</evidence>
<sequence>MSEIGFKYSILASGSSGNSFYLETSKKKLLVDAGLSGKKITSLLAEINRKPEDLDAILITHEHSDHIHGVGVLARKYGMDLYANEKTWQAMENSKYLGKVDSSQKHIFEMGKTKTFGDIDIESFGVSHDAVAPQFYRFMKDDKSFVLLTDTGYVSDRMAGIVENADGYLIEANHDVEILRSGSYAWRLKQRILSDLGHLSNEDGAEAMIRTLGNRTKKIYLGHLSKENNIKELAHMTMVNQLAQADLGVGVDFKVYDTSPDTATPLTEI</sequence>
<feature type="chain" id="PRO_0000459009" description="Exodeoxyribonuclease WalJ">
    <location>
        <begin position="1"/>
        <end position="269"/>
    </location>
</feature>
<comment type="function">
    <text evidence="1 2 3 6">5'-&gt;3' double-stranded DNA exonuclease (By similarity). May be involved in the WalK/WalR signal transduction pathway (PubMed:14651645). Required for accurate coordination of cell division with DNA replication (By similarity). May play a role in cell wall metabolism (By similarity).</text>
</comment>
<comment type="cofactor">
    <cofactor evidence="4">
        <name>Fe(2+)</name>
        <dbReference type="ChEBI" id="CHEBI:29033"/>
    </cofactor>
    <cofactor evidence="4">
        <name>Zn(2+)</name>
        <dbReference type="ChEBI" id="CHEBI:29105"/>
    </cofactor>
    <cofactor evidence="4">
        <name>Mn(2+)</name>
        <dbReference type="ChEBI" id="CHEBI:29035"/>
    </cofactor>
    <text evidence="4">Binds 2 metal ions per subunit. The endogenous metal is unknown.</text>
</comment>
<comment type="subcellular location">
    <subcellularLocation>
        <location evidence="1">Cell membrane</location>
        <topology evidence="1">Peripheral membrane protein</topology>
        <orientation evidence="1">Cytoplasmic side</orientation>
    </subcellularLocation>
    <text evidence="1">In exponentially growing cells mostly associated with the cytoplasmic side of the cell membrane.</text>
</comment>
<comment type="disruption phenotype">
    <text evidence="5">Does not show significantly altered growth rate.</text>
</comment>
<comment type="miscellaneous">
    <text evidence="1">Part of a walR-walK-walJ operon.</text>
</comment>
<comment type="similarity">
    <text evidence="8">Belongs to the metallo-beta-lactamase superfamily.</text>
</comment>
<accession>Q8DPL9</accession>
<keyword id="KW-1003">Cell membrane</keyword>
<keyword id="KW-0269">Exonuclease</keyword>
<keyword id="KW-0378">Hydrolase</keyword>
<keyword id="KW-0472">Membrane</keyword>
<keyword id="KW-0479">Metal-binding</keyword>
<keyword id="KW-0540">Nuclease</keyword>
<keyword id="KW-1185">Reference proteome</keyword>
<keyword id="KW-0862">Zinc</keyword>
<name>WALJ_STRR6</name>
<proteinExistence type="inferred from homology"/>
<protein>
    <recommendedName>
        <fullName evidence="2">Exodeoxyribonuclease WalJ</fullName>
        <ecNumber evidence="2">3.1.11.-</ecNumber>
    </recommendedName>
</protein>
<dbReference type="EC" id="3.1.11.-" evidence="2"/>
<dbReference type="EMBL" id="AE007317">
    <property type="protein sequence ID" value="AAK99908.1"/>
    <property type="molecule type" value="Genomic_DNA"/>
</dbReference>
<dbReference type="PIR" id="B95142">
    <property type="entry name" value="B95142"/>
</dbReference>
<dbReference type="PIR" id="H98009">
    <property type="entry name" value="H98009"/>
</dbReference>
<dbReference type="RefSeq" id="NP_358698.1">
    <property type="nucleotide sequence ID" value="NC_003098.1"/>
</dbReference>
<dbReference type="RefSeq" id="WP_001289493.1">
    <property type="nucleotide sequence ID" value="NC_003098.1"/>
</dbReference>
<dbReference type="SMR" id="Q8DPL9"/>
<dbReference type="STRING" id="171101.spr1105"/>
<dbReference type="KEGG" id="spr:spr1105"/>
<dbReference type="PATRIC" id="fig|171101.6.peg.1200"/>
<dbReference type="eggNOG" id="COG1235">
    <property type="taxonomic scope" value="Bacteria"/>
</dbReference>
<dbReference type="HOGENOM" id="CLU_073253_0_0_9"/>
<dbReference type="Proteomes" id="UP000000586">
    <property type="component" value="Chromosome"/>
</dbReference>
<dbReference type="GO" id="GO:0005886">
    <property type="term" value="C:plasma membrane"/>
    <property type="evidence" value="ECO:0007669"/>
    <property type="project" value="UniProtKB-SubCell"/>
</dbReference>
<dbReference type="GO" id="GO:0004527">
    <property type="term" value="F:exonuclease activity"/>
    <property type="evidence" value="ECO:0007669"/>
    <property type="project" value="UniProtKB-KW"/>
</dbReference>
<dbReference type="GO" id="GO:0046872">
    <property type="term" value="F:metal ion binding"/>
    <property type="evidence" value="ECO:0007669"/>
    <property type="project" value="UniProtKB-KW"/>
</dbReference>
<dbReference type="CDD" id="cd07733">
    <property type="entry name" value="YycJ-like_MBL-fold"/>
    <property type="match status" value="1"/>
</dbReference>
<dbReference type="Gene3D" id="3.60.15.10">
    <property type="entry name" value="Ribonuclease Z/Hydroxyacylglutathione hydrolase-like"/>
    <property type="match status" value="1"/>
</dbReference>
<dbReference type="InterPro" id="IPR001279">
    <property type="entry name" value="Metallo-B-lactamas"/>
</dbReference>
<dbReference type="InterPro" id="IPR036866">
    <property type="entry name" value="RibonucZ/Hydroxyglut_hydro"/>
</dbReference>
<dbReference type="InterPro" id="IPR052533">
    <property type="entry name" value="WalJ_YycJ_ExoDNase_sf"/>
</dbReference>
<dbReference type="PANTHER" id="PTHR47619:SF1">
    <property type="entry name" value="EXODEOXYRIBONUCLEASE WALJ"/>
    <property type="match status" value="1"/>
</dbReference>
<dbReference type="PANTHER" id="PTHR47619">
    <property type="entry name" value="METALLO-HYDROLASE YYCJ-RELATED"/>
    <property type="match status" value="1"/>
</dbReference>
<dbReference type="Pfam" id="PF12706">
    <property type="entry name" value="Lactamase_B_2"/>
    <property type="match status" value="1"/>
</dbReference>
<dbReference type="SMART" id="SM00849">
    <property type="entry name" value="Lactamase_B"/>
    <property type="match status" value="1"/>
</dbReference>
<dbReference type="SUPFAM" id="SSF56281">
    <property type="entry name" value="Metallo-hydrolase/oxidoreductase"/>
    <property type="match status" value="1"/>
</dbReference>
<organism evidence="9 10">
    <name type="scientific">Streptococcus pneumoniae (strain ATCC BAA-255 / R6)</name>
    <dbReference type="NCBI Taxonomy" id="171101"/>
    <lineage>
        <taxon>Bacteria</taxon>
        <taxon>Bacillati</taxon>
        <taxon>Bacillota</taxon>
        <taxon>Bacilli</taxon>
        <taxon>Lactobacillales</taxon>
        <taxon>Streptococcaceae</taxon>
        <taxon>Streptococcus</taxon>
    </lineage>
</organism>
<gene>
    <name evidence="1" type="primary">walJ</name>
    <name evidence="9" type="synonym">vicX</name>
    <name evidence="7" type="synonym">yycJ</name>
    <name evidence="9" type="ordered locus">spr1105</name>
</gene>